<accession>B4QX57</accession>
<comment type="function">
    <text evidence="3">Part of the small subunit (SSU) processome, first precursor of the small eukaryotic ribosomal subunit. During the assembly of the SSU processome in the nucleolus, many ribosome biogenesis factors, an RNA chaperone and ribosomal proteins associate with the nascent pre-rRNA and work in concert to generate RNA folding, modifications, rearrangements and cleavage as well as targeted degradation of pre-ribosomal RNA by the RNA exosome.</text>
</comment>
<comment type="subunit">
    <text evidence="3">Part of the small subunit (SSU) processome, composed of more than 70 proteins and the RNA chaperone small nucleolar RNA (snoRNA) U3.</text>
</comment>
<comment type="subcellular location">
    <subcellularLocation>
        <location evidence="3">Nucleus</location>
        <location evidence="3">Nucleolus</location>
    </subcellularLocation>
    <subcellularLocation>
        <location evidence="2">Chromosome</location>
    </subcellularLocation>
    <text evidence="2">Localizes to condensed chromosomes in mitosis.</text>
</comment>
<comment type="similarity">
    <text evidence="4">Belongs to the NRAP family.</text>
</comment>
<keyword id="KW-0158">Chromosome</keyword>
<keyword id="KW-0539">Nucleus</keyword>
<keyword id="KW-1185">Reference proteome</keyword>
<keyword id="KW-0694">RNA-binding</keyword>
<evidence type="ECO:0000250" key="1">
    <source>
        <dbReference type="UniProtKB" id="Q8IH00"/>
    </source>
</evidence>
<evidence type="ECO:0000250" key="2">
    <source>
        <dbReference type="UniProtKB" id="Q8R5K4"/>
    </source>
</evidence>
<evidence type="ECO:0000250" key="3">
    <source>
        <dbReference type="UniProtKB" id="Q9H6R4"/>
    </source>
</evidence>
<evidence type="ECO:0000255" key="4"/>
<evidence type="ECO:0000256" key="5">
    <source>
        <dbReference type="SAM" id="MobiDB-lite"/>
    </source>
</evidence>
<evidence type="ECO:0000312" key="6">
    <source>
        <dbReference type="EMBL" id="EDX12711.1"/>
    </source>
</evidence>
<reference evidence="6" key="1">
    <citation type="journal article" date="2007" name="Nature">
        <title>Evolution of genes and genomes on the Drosophila phylogeny.</title>
        <authorList>
            <consortium name="Drosophila 12 genomes consortium"/>
        </authorList>
    </citation>
    <scope>NUCLEOTIDE SEQUENCE [LARGE SCALE GENOMIC DNA]</scope>
</reference>
<sequence>MPGKLVGSSEEAARTGTQANAHAEDHSDLEHSAPSTDDGFDEPKPPIAKSVPPSTAIPKKNNFKHRGDTKNVKPPTLEEMKELRDTQNLFHSNLFKLQVKEMLEELQLKQKYTDFIENWLESFTVFTRQLKDGLMERTHLEVPMKLSEKPTGFVFSKPTREPYLIGAAATGTLLGPKIVVDVALEMPKESLHKEDYLNLRYDQKRALYLTYVTERMMESQNYAQDQFNFNYYANNPLKPVLELIPVTKQVNKHLQVRLFITAPLSSFKPGRFVPWNNNIRPSFYGDEWDEQDPLPSTQHYNANVLFDLTLSENQAQLDKAFKSRRNFQDGLLLLKVWLRQRQLDIGYSGFGAHILAAFIVYLNKQRILHQSSSSYQVARTVWNQLANTDWTKGISLAVDPIQTEELNKFAKHYDVCFIDFTGQHNLCANIPLYLYQRVREEAKLAVELLNDMKLNSFPLIFMQKCPLYSRVDNILKISNYSCINQMLTLHSQPRIKYDFANYGYPQLLHLLTELLKKGLAERVHSILPLETATAAWPVENKAPVIGKYIQLGLILQPEHAYEVLNKGPAANDDPAGAEEFRRFWGEKSNLRRFQDGSITEAVVWGTAQDSPAKKRLIVRHIVLHLLEHHLQLDSKEVQYIGGELDQVYKLSPWFKVNKLKTKLSLDQDTDAEALSPHVIRCYDELARQLHGLNDLPLEIVSISGVSPIFRYCEPQPVLPQALLVENRILASTIQRVVIQLGQSGKWPTELSALRALKTAFLIEIGEKLEAQCRLHWVISADGLLVLKQGYCFLIELAHNKELALLKQEVTERGITTYVDNAASRFLERQHYILPKVSGALHSLHQTYSAFGSTVLLAKRWLATQLLDDGLWPDMATELLVAHLFQQRYAPQSIAAPQTGFIRFLQLLSHSDFNGELFLLNFNNSWQEQQIADLEHNYRSNRQSYPPLAVATSYDMQHAGRLWTSDQSPSQRVLGHVTRLARRALEIIETSLMSKDLRFVRPAQLFRASNEGYDLVIQFKPDLVPNSLSYDLGSPFVSFSQPNFSLPRAGSDYIARIVGLLRSAYSDFAAFFYNPHGGKELAIVWRPTTEFAAKPFKVTELQACSPSGNGKVQVLKETLLEDFKLLLKDFYLRIATPEELKREQREHQKPMRYFEANQAVAESKPKPKKHGKRKGTGKAAPPKKKRLIKSSTLKALK</sequence>
<gene>
    <name evidence="1" type="primary">Mat89Ba</name>
    <name type="ORF">GD20301</name>
</gene>
<protein>
    <recommendedName>
        <fullName evidence="3">Nucleolar protein 6</fullName>
    </recommendedName>
    <alternativeName>
        <fullName evidence="1">Maternal transcript 89Ba</fullName>
    </alternativeName>
</protein>
<dbReference type="EMBL" id="CM000364">
    <property type="protein sequence ID" value="EDX12711.1"/>
    <property type="molecule type" value="Genomic_DNA"/>
</dbReference>
<dbReference type="SMR" id="B4QX57"/>
<dbReference type="STRING" id="7240.B4QX57"/>
<dbReference type="EnsemblMetazoa" id="FBtr0220211">
    <property type="protein sequence ID" value="FBpp0218703"/>
    <property type="gene ID" value="FBgn0191776"/>
</dbReference>
<dbReference type="EnsemblMetazoa" id="XM_002103172.4">
    <property type="protein sequence ID" value="XP_002103208.2"/>
    <property type="gene ID" value="LOC6727853"/>
</dbReference>
<dbReference type="HOGENOM" id="CLU_003502_0_1_1"/>
<dbReference type="OMA" id="NPHGGKE"/>
<dbReference type="OrthoDB" id="10251401at2759"/>
<dbReference type="PhylomeDB" id="B4QX57"/>
<dbReference type="Proteomes" id="UP000000304">
    <property type="component" value="Chromosome 3R"/>
</dbReference>
<dbReference type="Bgee" id="FBgn0191776">
    <property type="expression patterns" value="Expressed in embryo and 3 other cell types or tissues"/>
</dbReference>
<dbReference type="GO" id="GO:0000794">
    <property type="term" value="C:condensed nuclear chromosome"/>
    <property type="evidence" value="ECO:0000250"/>
    <property type="project" value="UniProtKB"/>
</dbReference>
<dbReference type="GO" id="GO:0032545">
    <property type="term" value="C:CURI complex"/>
    <property type="evidence" value="ECO:0007669"/>
    <property type="project" value="TreeGrafter"/>
</dbReference>
<dbReference type="GO" id="GO:0032040">
    <property type="term" value="C:small-subunit processome"/>
    <property type="evidence" value="ECO:0000250"/>
    <property type="project" value="UniProtKB"/>
</dbReference>
<dbReference type="GO" id="GO:0034456">
    <property type="term" value="C:UTP-C complex"/>
    <property type="evidence" value="ECO:0007669"/>
    <property type="project" value="TreeGrafter"/>
</dbReference>
<dbReference type="GO" id="GO:0003723">
    <property type="term" value="F:RNA binding"/>
    <property type="evidence" value="ECO:0007669"/>
    <property type="project" value="UniProtKB-KW"/>
</dbReference>
<dbReference type="GO" id="GO:0042274">
    <property type="term" value="P:ribosomal small subunit biogenesis"/>
    <property type="evidence" value="ECO:0000250"/>
    <property type="project" value="UniProtKB"/>
</dbReference>
<dbReference type="GO" id="GO:0006364">
    <property type="term" value="P:rRNA processing"/>
    <property type="evidence" value="ECO:0007669"/>
    <property type="project" value="TreeGrafter"/>
</dbReference>
<dbReference type="GO" id="GO:0006409">
    <property type="term" value="P:tRNA export from nucleus"/>
    <property type="evidence" value="ECO:0007669"/>
    <property type="project" value="TreeGrafter"/>
</dbReference>
<dbReference type="FunFam" id="1.10.1410.10:FF:000005">
    <property type="entry name" value="Nucleolar protein 6"/>
    <property type="match status" value="1"/>
</dbReference>
<dbReference type="FunFam" id="1.10.1410.10:FF:000006">
    <property type="entry name" value="Nucleolar protein 6"/>
    <property type="match status" value="1"/>
</dbReference>
<dbReference type="Gene3D" id="1.10.1410.10">
    <property type="match status" value="2"/>
</dbReference>
<dbReference type="Gene3D" id="3.30.70.3030">
    <property type="match status" value="1"/>
</dbReference>
<dbReference type="InterPro" id="IPR005554">
    <property type="entry name" value="NOL6/Upt22"/>
</dbReference>
<dbReference type="InterPro" id="IPR035082">
    <property type="entry name" value="Nrap_D1"/>
</dbReference>
<dbReference type="InterPro" id="IPR035367">
    <property type="entry name" value="Nrap_D2"/>
</dbReference>
<dbReference type="InterPro" id="IPR035368">
    <property type="entry name" value="Nrap_D3"/>
</dbReference>
<dbReference type="InterPro" id="IPR035369">
    <property type="entry name" value="Nrap_D4"/>
</dbReference>
<dbReference type="InterPro" id="IPR035370">
    <property type="entry name" value="Nrap_D5"/>
</dbReference>
<dbReference type="InterPro" id="IPR035371">
    <property type="entry name" value="Nrap_D6"/>
</dbReference>
<dbReference type="PANTHER" id="PTHR17972:SF0">
    <property type="entry name" value="NUCLEOLAR PROTEIN 6"/>
    <property type="match status" value="1"/>
</dbReference>
<dbReference type="PANTHER" id="PTHR17972">
    <property type="entry name" value="NUCLEOLAR RNA-ASSOCIATED PROTEIN"/>
    <property type="match status" value="1"/>
</dbReference>
<dbReference type="Pfam" id="PF03813">
    <property type="entry name" value="Nrap"/>
    <property type="match status" value="1"/>
</dbReference>
<dbReference type="Pfam" id="PF17403">
    <property type="entry name" value="Nrap_D2"/>
    <property type="match status" value="1"/>
</dbReference>
<dbReference type="Pfam" id="PF17404">
    <property type="entry name" value="Nrap_D3"/>
    <property type="match status" value="1"/>
</dbReference>
<dbReference type="Pfam" id="PF17405">
    <property type="entry name" value="Nrap_D4"/>
    <property type="match status" value="1"/>
</dbReference>
<dbReference type="Pfam" id="PF17406">
    <property type="entry name" value="Nrap_D5"/>
    <property type="match status" value="1"/>
</dbReference>
<dbReference type="Pfam" id="PF17407">
    <property type="entry name" value="Nrap_D6"/>
    <property type="match status" value="1"/>
</dbReference>
<organism>
    <name type="scientific">Drosophila simulans</name>
    <name type="common">Fruit fly</name>
    <dbReference type="NCBI Taxonomy" id="7240"/>
    <lineage>
        <taxon>Eukaryota</taxon>
        <taxon>Metazoa</taxon>
        <taxon>Ecdysozoa</taxon>
        <taxon>Arthropoda</taxon>
        <taxon>Hexapoda</taxon>
        <taxon>Insecta</taxon>
        <taxon>Pterygota</taxon>
        <taxon>Neoptera</taxon>
        <taxon>Endopterygota</taxon>
        <taxon>Diptera</taxon>
        <taxon>Brachycera</taxon>
        <taxon>Muscomorpha</taxon>
        <taxon>Ephydroidea</taxon>
        <taxon>Drosophilidae</taxon>
        <taxon>Drosophila</taxon>
        <taxon>Sophophora</taxon>
    </lineage>
</organism>
<proteinExistence type="inferred from homology"/>
<feature type="chain" id="PRO_0000383629" description="Nucleolar protein 6">
    <location>
        <begin position="1"/>
        <end position="1196"/>
    </location>
</feature>
<feature type="region of interest" description="Disordered" evidence="5">
    <location>
        <begin position="1"/>
        <end position="74"/>
    </location>
</feature>
<feature type="region of interest" description="Disordered" evidence="5">
    <location>
        <begin position="1140"/>
        <end position="1196"/>
    </location>
</feature>
<feature type="compositionally biased region" description="Basic and acidic residues" evidence="5">
    <location>
        <begin position="22"/>
        <end position="31"/>
    </location>
</feature>
<feature type="compositionally biased region" description="Basic and acidic residues" evidence="5">
    <location>
        <begin position="65"/>
        <end position="74"/>
    </location>
</feature>
<feature type="compositionally biased region" description="Basic residues" evidence="5">
    <location>
        <begin position="1165"/>
        <end position="1187"/>
    </location>
</feature>
<name>NOL6_DROSI</name>